<reference key="1">
    <citation type="journal article" date="2009" name="J. Bacteriol.">
        <title>Genome sequence of Azotobacter vinelandii, an obligate aerobe specialized to support diverse anaerobic metabolic processes.</title>
        <authorList>
            <person name="Setubal J.C."/>
            <person name="Dos Santos P."/>
            <person name="Goldman B.S."/>
            <person name="Ertesvaag H."/>
            <person name="Espin G."/>
            <person name="Rubio L.M."/>
            <person name="Valla S."/>
            <person name="Almeida N.F."/>
            <person name="Balasubramanian D."/>
            <person name="Cromes L."/>
            <person name="Curatti L."/>
            <person name="Du Z."/>
            <person name="Godsy E."/>
            <person name="Goodner B."/>
            <person name="Hellner-Burris K."/>
            <person name="Hernandez J.A."/>
            <person name="Houmiel K."/>
            <person name="Imperial J."/>
            <person name="Kennedy C."/>
            <person name="Larson T.J."/>
            <person name="Latreille P."/>
            <person name="Ligon L.S."/>
            <person name="Lu J."/>
            <person name="Maerk M."/>
            <person name="Miller N.M."/>
            <person name="Norton S."/>
            <person name="O'Carroll I.P."/>
            <person name="Paulsen I."/>
            <person name="Raulfs E.C."/>
            <person name="Roemer R."/>
            <person name="Rosser J."/>
            <person name="Segura D."/>
            <person name="Slater S."/>
            <person name="Stricklin S.L."/>
            <person name="Studholme D.J."/>
            <person name="Sun J."/>
            <person name="Viana C.J."/>
            <person name="Wallin E."/>
            <person name="Wang B."/>
            <person name="Wheeler C."/>
            <person name="Zhu H."/>
            <person name="Dean D.R."/>
            <person name="Dixon R."/>
            <person name="Wood D."/>
        </authorList>
    </citation>
    <scope>NUCLEOTIDE SEQUENCE [LARGE SCALE GENOMIC DNA]</scope>
    <source>
        <strain>DJ / ATCC BAA-1303</strain>
    </source>
</reference>
<feature type="chain" id="PRO_1000205964" description="Tetraacyldisaccharide 4'-kinase">
    <location>
        <begin position="1"/>
        <end position="333"/>
    </location>
</feature>
<feature type="binding site" evidence="1">
    <location>
        <begin position="60"/>
        <end position="67"/>
    </location>
    <ligand>
        <name>ATP</name>
        <dbReference type="ChEBI" id="CHEBI:30616"/>
    </ligand>
</feature>
<gene>
    <name evidence="1" type="primary">lpxK</name>
    <name type="ordered locus">Avin_14760</name>
</gene>
<evidence type="ECO:0000255" key="1">
    <source>
        <dbReference type="HAMAP-Rule" id="MF_00409"/>
    </source>
</evidence>
<name>LPXK_AZOVD</name>
<comment type="function">
    <text evidence="1">Transfers the gamma-phosphate of ATP to the 4'-position of a tetraacyldisaccharide 1-phosphate intermediate (termed DS-1-P) to form tetraacyldisaccharide 1,4'-bis-phosphate (lipid IVA).</text>
</comment>
<comment type="catalytic activity">
    <reaction evidence="1">
        <text>a lipid A disaccharide + ATP = a lipid IVA + ADP + H(+)</text>
        <dbReference type="Rhea" id="RHEA:67840"/>
        <dbReference type="ChEBI" id="CHEBI:15378"/>
        <dbReference type="ChEBI" id="CHEBI:30616"/>
        <dbReference type="ChEBI" id="CHEBI:176343"/>
        <dbReference type="ChEBI" id="CHEBI:176425"/>
        <dbReference type="ChEBI" id="CHEBI:456216"/>
        <dbReference type="EC" id="2.7.1.130"/>
    </reaction>
</comment>
<comment type="pathway">
    <text evidence="1">Glycolipid biosynthesis; lipid IV(A) biosynthesis; lipid IV(A) from (3R)-3-hydroxytetradecanoyl-[acyl-carrier-protein] and UDP-N-acetyl-alpha-D-glucosamine: step 6/6.</text>
</comment>
<comment type="similarity">
    <text evidence="1">Belongs to the LpxK family.</text>
</comment>
<organism>
    <name type="scientific">Azotobacter vinelandii (strain DJ / ATCC BAA-1303)</name>
    <dbReference type="NCBI Taxonomy" id="322710"/>
    <lineage>
        <taxon>Bacteria</taxon>
        <taxon>Pseudomonadati</taxon>
        <taxon>Pseudomonadota</taxon>
        <taxon>Gammaproteobacteria</taxon>
        <taxon>Pseudomonadales</taxon>
        <taxon>Pseudomonadaceae</taxon>
        <taxon>Azotobacter</taxon>
    </lineage>
</organism>
<dbReference type="EC" id="2.7.1.130" evidence="1"/>
<dbReference type="EMBL" id="CP001157">
    <property type="protein sequence ID" value="ACO77692.1"/>
    <property type="molecule type" value="Genomic_DNA"/>
</dbReference>
<dbReference type="RefSeq" id="WP_012700111.1">
    <property type="nucleotide sequence ID" value="NC_012560.1"/>
</dbReference>
<dbReference type="SMR" id="C1DR19"/>
<dbReference type="STRING" id="322710.Avin_14760"/>
<dbReference type="EnsemblBacteria" id="ACO77692">
    <property type="protein sequence ID" value="ACO77692"/>
    <property type="gene ID" value="Avin_14760"/>
</dbReference>
<dbReference type="GeneID" id="88184775"/>
<dbReference type="KEGG" id="avn:Avin_14760"/>
<dbReference type="eggNOG" id="COG1663">
    <property type="taxonomic scope" value="Bacteria"/>
</dbReference>
<dbReference type="HOGENOM" id="CLU_038816_2_0_6"/>
<dbReference type="OrthoDB" id="9766423at2"/>
<dbReference type="UniPathway" id="UPA00359">
    <property type="reaction ID" value="UER00482"/>
</dbReference>
<dbReference type="Proteomes" id="UP000002424">
    <property type="component" value="Chromosome"/>
</dbReference>
<dbReference type="GO" id="GO:0005886">
    <property type="term" value="C:plasma membrane"/>
    <property type="evidence" value="ECO:0007669"/>
    <property type="project" value="TreeGrafter"/>
</dbReference>
<dbReference type="GO" id="GO:0005524">
    <property type="term" value="F:ATP binding"/>
    <property type="evidence" value="ECO:0007669"/>
    <property type="project" value="UniProtKB-UniRule"/>
</dbReference>
<dbReference type="GO" id="GO:0009029">
    <property type="term" value="F:tetraacyldisaccharide 4'-kinase activity"/>
    <property type="evidence" value="ECO:0007669"/>
    <property type="project" value="UniProtKB-UniRule"/>
</dbReference>
<dbReference type="GO" id="GO:0009245">
    <property type="term" value="P:lipid A biosynthetic process"/>
    <property type="evidence" value="ECO:0007669"/>
    <property type="project" value="UniProtKB-UniRule"/>
</dbReference>
<dbReference type="GO" id="GO:0009244">
    <property type="term" value="P:lipopolysaccharide core region biosynthetic process"/>
    <property type="evidence" value="ECO:0007669"/>
    <property type="project" value="TreeGrafter"/>
</dbReference>
<dbReference type="HAMAP" id="MF_00409">
    <property type="entry name" value="LpxK"/>
    <property type="match status" value="1"/>
</dbReference>
<dbReference type="InterPro" id="IPR003758">
    <property type="entry name" value="LpxK"/>
</dbReference>
<dbReference type="InterPro" id="IPR027417">
    <property type="entry name" value="P-loop_NTPase"/>
</dbReference>
<dbReference type="NCBIfam" id="TIGR00682">
    <property type="entry name" value="lpxK"/>
    <property type="match status" value="1"/>
</dbReference>
<dbReference type="PANTHER" id="PTHR42724">
    <property type="entry name" value="TETRAACYLDISACCHARIDE 4'-KINASE"/>
    <property type="match status" value="1"/>
</dbReference>
<dbReference type="PANTHER" id="PTHR42724:SF1">
    <property type="entry name" value="TETRAACYLDISACCHARIDE 4'-KINASE, MITOCHONDRIAL-RELATED"/>
    <property type="match status" value="1"/>
</dbReference>
<dbReference type="Pfam" id="PF02606">
    <property type="entry name" value="LpxK"/>
    <property type="match status" value="1"/>
</dbReference>
<dbReference type="SUPFAM" id="SSF52540">
    <property type="entry name" value="P-loop containing nucleoside triphosphate hydrolases"/>
    <property type="match status" value="1"/>
</dbReference>
<sequence>MALADRLLEAWYRGHPALVLLRPLEALFRCVAQRRRERFLRGEGGIYRAPVPVVVVGNVTVGGTGKTPLILWLIEACRRRGLRVGVVSRGYGARPPRLPWRVTADQSAGQAGDEPLLIVQRTGVPLAIDPDRPRAVRALLKEQPLDLILSDDGLQHYRLARDLELVLLDAVRGLGNGHCLPAGPLREPAERLASVDAVLHNGAAWDPPGGYAFSLLPSALVHMATGERRPLDHFPPGTALHALAGIGNPRRFFATLEALHWRPIPHAFADHARYRAEQLRFSPALPLVMTEKDAVKCRAFAPADCWYLAVDAVPSPAFADWFDAALARLLASS</sequence>
<proteinExistence type="inferred from homology"/>
<accession>C1DR19</accession>
<protein>
    <recommendedName>
        <fullName evidence="1">Tetraacyldisaccharide 4'-kinase</fullName>
        <ecNumber evidence="1">2.7.1.130</ecNumber>
    </recommendedName>
    <alternativeName>
        <fullName evidence="1">Lipid A 4'-kinase</fullName>
    </alternativeName>
</protein>
<keyword id="KW-0067">ATP-binding</keyword>
<keyword id="KW-0418">Kinase</keyword>
<keyword id="KW-0441">Lipid A biosynthesis</keyword>
<keyword id="KW-0444">Lipid biosynthesis</keyword>
<keyword id="KW-0443">Lipid metabolism</keyword>
<keyword id="KW-0547">Nucleotide-binding</keyword>
<keyword id="KW-0808">Transferase</keyword>